<keyword id="KW-0067">ATP-binding</keyword>
<keyword id="KW-0963">Cytoplasm</keyword>
<keyword id="KW-0418">Kinase</keyword>
<keyword id="KW-0460">Magnesium</keyword>
<keyword id="KW-0479">Metal-binding</keyword>
<keyword id="KW-0546">Nucleotide metabolism</keyword>
<keyword id="KW-0547">Nucleotide-binding</keyword>
<keyword id="KW-0597">Phosphoprotein</keyword>
<keyword id="KW-0808">Transferase</keyword>
<protein>
    <recommendedName>
        <fullName evidence="1">Nucleoside diphosphate kinase</fullName>
        <shortName evidence="1">NDK</shortName>
        <shortName evidence="1">NDP kinase</shortName>
        <ecNumber evidence="1">2.7.4.6</ecNumber>
    </recommendedName>
    <alternativeName>
        <fullName evidence="1">Nucleoside-2-P kinase</fullName>
    </alternativeName>
</protein>
<feature type="chain" id="PRO_1000206219" description="Nucleoside diphosphate kinase">
    <location>
        <begin position="1"/>
        <end position="139"/>
    </location>
</feature>
<feature type="active site" description="Pros-phosphohistidine intermediate" evidence="1">
    <location>
        <position position="117"/>
    </location>
</feature>
<feature type="binding site" evidence="1">
    <location>
        <position position="10"/>
    </location>
    <ligand>
        <name>ATP</name>
        <dbReference type="ChEBI" id="CHEBI:30616"/>
    </ligand>
</feature>
<feature type="binding site" evidence="1">
    <location>
        <position position="58"/>
    </location>
    <ligand>
        <name>ATP</name>
        <dbReference type="ChEBI" id="CHEBI:30616"/>
    </ligand>
</feature>
<feature type="binding site" evidence="1">
    <location>
        <position position="86"/>
    </location>
    <ligand>
        <name>ATP</name>
        <dbReference type="ChEBI" id="CHEBI:30616"/>
    </ligand>
</feature>
<feature type="binding site" evidence="1">
    <location>
        <position position="92"/>
    </location>
    <ligand>
        <name>ATP</name>
        <dbReference type="ChEBI" id="CHEBI:30616"/>
    </ligand>
</feature>
<feature type="binding site" evidence="1">
    <location>
        <position position="104"/>
    </location>
    <ligand>
        <name>ATP</name>
        <dbReference type="ChEBI" id="CHEBI:30616"/>
    </ligand>
</feature>
<feature type="binding site" evidence="1">
    <location>
        <position position="114"/>
    </location>
    <ligand>
        <name>ATP</name>
        <dbReference type="ChEBI" id="CHEBI:30616"/>
    </ligand>
</feature>
<evidence type="ECO:0000255" key="1">
    <source>
        <dbReference type="HAMAP-Rule" id="MF_00451"/>
    </source>
</evidence>
<organism>
    <name type="scientific">Rhodococcus erythropolis (strain PR4 / NBRC 100887)</name>
    <dbReference type="NCBI Taxonomy" id="234621"/>
    <lineage>
        <taxon>Bacteria</taxon>
        <taxon>Bacillati</taxon>
        <taxon>Actinomycetota</taxon>
        <taxon>Actinomycetes</taxon>
        <taxon>Mycobacteriales</taxon>
        <taxon>Nocardiaceae</taxon>
        <taxon>Rhodococcus</taxon>
        <taxon>Rhodococcus erythropolis group</taxon>
    </lineage>
</organism>
<reference key="1">
    <citation type="submission" date="2005-03" db="EMBL/GenBank/DDBJ databases">
        <title>Comparison of the complete genome sequences of Rhodococcus erythropolis PR4 and Rhodococcus opacus B4.</title>
        <authorList>
            <person name="Takarada H."/>
            <person name="Sekine M."/>
            <person name="Hosoyama A."/>
            <person name="Yamada R."/>
            <person name="Fujisawa T."/>
            <person name="Omata S."/>
            <person name="Shimizu A."/>
            <person name="Tsukatani N."/>
            <person name="Tanikawa S."/>
            <person name="Fujita N."/>
            <person name="Harayama S."/>
        </authorList>
    </citation>
    <scope>NUCLEOTIDE SEQUENCE [LARGE SCALE GENOMIC DNA]</scope>
    <source>
        <strain>PR4 / NBRC 100887</strain>
    </source>
</reference>
<sequence length="139" mass="14910">MTERTLVLIKPDAVARGYVGEILSRIERKGLTIAALELRVASEEVAGSHYAEHAERPFYPSLLEFITSGPLVAAVLEGPRAIAAFRQLAGGTDPVDKALPGTIRGDFGLEAQQNLVHGSDSVESAEREIALWFPALSSI</sequence>
<accession>C1A1M0</accession>
<comment type="function">
    <text evidence="1">Major role in the synthesis of nucleoside triphosphates other than ATP. The ATP gamma phosphate is transferred to the NDP beta phosphate via a ping-pong mechanism, using a phosphorylated active-site intermediate.</text>
</comment>
<comment type="catalytic activity">
    <reaction evidence="1">
        <text>a 2'-deoxyribonucleoside 5'-diphosphate + ATP = a 2'-deoxyribonucleoside 5'-triphosphate + ADP</text>
        <dbReference type="Rhea" id="RHEA:44640"/>
        <dbReference type="ChEBI" id="CHEBI:30616"/>
        <dbReference type="ChEBI" id="CHEBI:61560"/>
        <dbReference type="ChEBI" id="CHEBI:73316"/>
        <dbReference type="ChEBI" id="CHEBI:456216"/>
        <dbReference type="EC" id="2.7.4.6"/>
    </reaction>
</comment>
<comment type="catalytic activity">
    <reaction evidence="1">
        <text>a ribonucleoside 5'-diphosphate + ATP = a ribonucleoside 5'-triphosphate + ADP</text>
        <dbReference type="Rhea" id="RHEA:18113"/>
        <dbReference type="ChEBI" id="CHEBI:30616"/>
        <dbReference type="ChEBI" id="CHEBI:57930"/>
        <dbReference type="ChEBI" id="CHEBI:61557"/>
        <dbReference type="ChEBI" id="CHEBI:456216"/>
        <dbReference type="EC" id="2.7.4.6"/>
    </reaction>
</comment>
<comment type="cofactor">
    <cofactor evidence="1">
        <name>Mg(2+)</name>
        <dbReference type="ChEBI" id="CHEBI:18420"/>
    </cofactor>
</comment>
<comment type="subunit">
    <text evidence="1">Homotetramer.</text>
</comment>
<comment type="subcellular location">
    <subcellularLocation>
        <location evidence="1">Cytoplasm</location>
    </subcellularLocation>
</comment>
<comment type="similarity">
    <text evidence="1">Belongs to the NDK family.</text>
</comment>
<proteinExistence type="inferred from homology"/>
<dbReference type="EC" id="2.7.4.6" evidence="1"/>
<dbReference type="EMBL" id="AP008957">
    <property type="protein sequence ID" value="BAH34505.1"/>
    <property type="molecule type" value="Genomic_DNA"/>
</dbReference>
<dbReference type="RefSeq" id="WP_019749070.1">
    <property type="nucleotide sequence ID" value="NC_012490.1"/>
</dbReference>
<dbReference type="SMR" id="C1A1M0"/>
<dbReference type="GeneID" id="57486298"/>
<dbReference type="KEGG" id="rer:RER_37970"/>
<dbReference type="eggNOG" id="COG0105">
    <property type="taxonomic scope" value="Bacteria"/>
</dbReference>
<dbReference type="HOGENOM" id="CLU_060216_6_3_11"/>
<dbReference type="Proteomes" id="UP000002204">
    <property type="component" value="Chromosome"/>
</dbReference>
<dbReference type="GO" id="GO:0005737">
    <property type="term" value="C:cytoplasm"/>
    <property type="evidence" value="ECO:0007669"/>
    <property type="project" value="UniProtKB-SubCell"/>
</dbReference>
<dbReference type="GO" id="GO:0005524">
    <property type="term" value="F:ATP binding"/>
    <property type="evidence" value="ECO:0007669"/>
    <property type="project" value="UniProtKB-UniRule"/>
</dbReference>
<dbReference type="GO" id="GO:0046872">
    <property type="term" value="F:metal ion binding"/>
    <property type="evidence" value="ECO:0007669"/>
    <property type="project" value="UniProtKB-KW"/>
</dbReference>
<dbReference type="GO" id="GO:0004550">
    <property type="term" value="F:nucleoside diphosphate kinase activity"/>
    <property type="evidence" value="ECO:0007669"/>
    <property type="project" value="UniProtKB-UniRule"/>
</dbReference>
<dbReference type="GO" id="GO:0006241">
    <property type="term" value="P:CTP biosynthetic process"/>
    <property type="evidence" value="ECO:0007669"/>
    <property type="project" value="UniProtKB-UniRule"/>
</dbReference>
<dbReference type="GO" id="GO:0006183">
    <property type="term" value="P:GTP biosynthetic process"/>
    <property type="evidence" value="ECO:0007669"/>
    <property type="project" value="UniProtKB-UniRule"/>
</dbReference>
<dbReference type="GO" id="GO:0006228">
    <property type="term" value="P:UTP biosynthetic process"/>
    <property type="evidence" value="ECO:0007669"/>
    <property type="project" value="UniProtKB-UniRule"/>
</dbReference>
<dbReference type="CDD" id="cd04413">
    <property type="entry name" value="NDPk_I"/>
    <property type="match status" value="1"/>
</dbReference>
<dbReference type="FunFam" id="3.30.70.141:FF:000003">
    <property type="entry name" value="Nucleoside diphosphate kinase"/>
    <property type="match status" value="1"/>
</dbReference>
<dbReference type="Gene3D" id="3.30.70.141">
    <property type="entry name" value="Nucleoside diphosphate kinase-like domain"/>
    <property type="match status" value="1"/>
</dbReference>
<dbReference type="HAMAP" id="MF_00451">
    <property type="entry name" value="NDP_kinase"/>
    <property type="match status" value="1"/>
</dbReference>
<dbReference type="InterPro" id="IPR034907">
    <property type="entry name" value="NDK-like_dom"/>
</dbReference>
<dbReference type="InterPro" id="IPR036850">
    <property type="entry name" value="NDK-like_dom_sf"/>
</dbReference>
<dbReference type="InterPro" id="IPR001564">
    <property type="entry name" value="Nucleoside_diP_kinase"/>
</dbReference>
<dbReference type="InterPro" id="IPR023005">
    <property type="entry name" value="Nucleoside_diP_kinase_AS"/>
</dbReference>
<dbReference type="NCBIfam" id="NF001908">
    <property type="entry name" value="PRK00668.1"/>
    <property type="match status" value="1"/>
</dbReference>
<dbReference type="PANTHER" id="PTHR11349">
    <property type="entry name" value="NUCLEOSIDE DIPHOSPHATE KINASE"/>
    <property type="match status" value="1"/>
</dbReference>
<dbReference type="Pfam" id="PF00334">
    <property type="entry name" value="NDK"/>
    <property type="match status" value="1"/>
</dbReference>
<dbReference type="PRINTS" id="PR01243">
    <property type="entry name" value="NUCDPKINASE"/>
</dbReference>
<dbReference type="SMART" id="SM00562">
    <property type="entry name" value="NDK"/>
    <property type="match status" value="1"/>
</dbReference>
<dbReference type="SUPFAM" id="SSF54919">
    <property type="entry name" value="Nucleoside diphosphate kinase, NDK"/>
    <property type="match status" value="1"/>
</dbReference>
<dbReference type="PROSITE" id="PS00469">
    <property type="entry name" value="NDPK"/>
    <property type="match status" value="1"/>
</dbReference>
<dbReference type="PROSITE" id="PS51374">
    <property type="entry name" value="NDPK_LIKE"/>
    <property type="match status" value="1"/>
</dbReference>
<gene>
    <name evidence="1" type="primary">ndk</name>
    <name type="ordered locus">RER_37970</name>
</gene>
<name>NDK_RHOE4</name>